<keyword id="KW-0233">DNA recombination</keyword>
<keyword id="KW-0238">DNA-binding</keyword>
<keyword id="KW-1185">Reference proteome</keyword>
<keyword id="KW-0804">Transcription</keyword>
<keyword id="KW-0805">Transcription regulation</keyword>
<keyword id="KW-0810">Translation regulation</keyword>
<accession>B8F4T7</accession>
<name>IHFA_GLAP5</name>
<comment type="function">
    <text evidence="1">This protein is one of the two subunits of integration host factor, a specific DNA-binding protein that functions in genetic recombination as well as in transcriptional and translational control.</text>
</comment>
<comment type="subunit">
    <text evidence="1">Heterodimer of an alpha and a beta chain.</text>
</comment>
<comment type="similarity">
    <text evidence="1">Belongs to the bacterial histone-like protein family.</text>
</comment>
<proteinExistence type="inferred from homology"/>
<feature type="chain" id="PRO_1000190425" description="Integration host factor subunit alpha">
    <location>
        <begin position="1"/>
        <end position="98"/>
    </location>
</feature>
<reference key="1">
    <citation type="journal article" date="2009" name="J. Bacteriol.">
        <title>Complete genome sequence of Haemophilus parasuis SH0165.</title>
        <authorList>
            <person name="Yue M."/>
            <person name="Yang F."/>
            <person name="Yang J."/>
            <person name="Bei W."/>
            <person name="Cai X."/>
            <person name="Chen L."/>
            <person name="Dong J."/>
            <person name="Zhou R."/>
            <person name="Jin M."/>
            <person name="Jin Q."/>
            <person name="Chen H."/>
        </authorList>
    </citation>
    <scope>NUCLEOTIDE SEQUENCE [LARGE SCALE GENOMIC DNA]</scope>
    <source>
        <strain>SH0165</strain>
    </source>
</reference>
<organism>
    <name type="scientific">Glaesserella parasuis serovar 5 (strain SH0165)</name>
    <name type="common">Haemophilus parasuis</name>
    <dbReference type="NCBI Taxonomy" id="557723"/>
    <lineage>
        <taxon>Bacteria</taxon>
        <taxon>Pseudomonadati</taxon>
        <taxon>Pseudomonadota</taxon>
        <taxon>Gammaproteobacteria</taxon>
        <taxon>Pasteurellales</taxon>
        <taxon>Pasteurellaceae</taxon>
        <taxon>Glaesserella</taxon>
    </lineage>
</organism>
<protein>
    <recommendedName>
        <fullName evidence="1">Integration host factor subunit alpha</fullName>
        <shortName evidence="1">IHF-alpha</shortName>
    </recommendedName>
</protein>
<gene>
    <name evidence="1" type="primary">ihfA</name>
    <name evidence="1" type="synonym">himA</name>
    <name type="ordered locus">HAPS_0693</name>
</gene>
<evidence type="ECO:0000255" key="1">
    <source>
        <dbReference type="HAMAP-Rule" id="MF_00380"/>
    </source>
</evidence>
<sequence length="98" mass="11093">MALTKIEIAENLVERCGLDKRIAKQFVEDFFEEIRRSLESGEEVKLSGFGNFTVRDKKARPGRNPKTGEDVAVSARRVVVFKAGQKLRERVENAKVKA</sequence>
<dbReference type="EMBL" id="CP001321">
    <property type="protein sequence ID" value="ACL32339.1"/>
    <property type="molecule type" value="Genomic_DNA"/>
</dbReference>
<dbReference type="RefSeq" id="WP_005710633.1">
    <property type="nucleotide sequence ID" value="NC_011852.1"/>
</dbReference>
<dbReference type="SMR" id="B8F4T7"/>
<dbReference type="STRING" id="557723.HAPS_0693"/>
<dbReference type="KEGG" id="hap:HAPS_0693"/>
<dbReference type="HOGENOM" id="CLU_105066_1_3_6"/>
<dbReference type="Proteomes" id="UP000006743">
    <property type="component" value="Chromosome"/>
</dbReference>
<dbReference type="GO" id="GO:0005829">
    <property type="term" value="C:cytosol"/>
    <property type="evidence" value="ECO:0007669"/>
    <property type="project" value="TreeGrafter"/>
</dbReference>
<dbReference type="GO" id="GO:0003677">
    <property type="term" value="F:DNA binding"/>
    <property type="evidence" value="ECO:0007669"/>
    <property type="project" value="UniProtKB-UniRule"/>
</dbReference>
<dbReference type="GO" id="GO:0030527">
    <property type="term" value="F:structural constituent of chromatin"/>
    <property type="evidence" value="ECO:0007669"/>
    <property type="project" value="InterPro"/>
</dbReference>
<dbReference type="GO" id="GO:0006310">
    <property type="term" value="P:DNA recombination"/>
    <property type="evidence" value="ECO:0007669"/>
    <property type="project" value="UniProtKB-UniRule"/>
</dbReference>
<dbReference type="GO" id="GO:0009893">
    <property type="term" value="P:positive regulation of metabolic process"/>
    <property type="evidence" value="ECO:0007669"/>
    <property type="project" value="UniProtKB-ARBA"/>
</dbReference>
<dbReference type="GO" id="GO:0006355">
    <property type="term" value="P:regulation of DNA-templated transcription"/>
    <property type="evidence" value="ECO:0007669"/>
    <property type="project" value="UniProtKB-UniRule"/>
</dbReference>
<dbReference type="GO" id="GO:0006417">
    <property type="term" value="P:regulation of translation"/>
    <property type="evidence" value="ECO:0007669"/>
    <property type="project" value="UniProtKB-UniRule"/>
</dbReference>
<dbReference type="CDD" id="cd13835">
    <property type="entry name" value="IHF_A"/>
    <property type="match status" value="1"/>
</dbReference>
<dbReference type="FunFam" id="4.10.520.10:FF:000002">
    <property type="entry name" value="Integration host factor subunit alpha"/>
    <property type="match status" value="1"/>
</dbReference>
<dbReference type="Gene3D" id="4.10.520.10">
    <property type="entry name" value="IHF-like DNA-binding proteins"/>
    <property type="match status" value="1"/>
</dbReference>
<dbReference type="HAMAP" id="MF_00380">
    <property type="entry name" value="IHF_alpha"/>
    <property type="match status" value="1"/>
</dbReference>
<dbReference type="InterPro" id="IPR000119">
    <property type="entry name" value="Hist_DNA-bd"/>
</dbReference>
<dbReference type="InterPro" id="IPR020816">
    <property type="entry name" value="Histone-like_DNA-bd_CS"/>
</dbReference>
<dbReference type="InterPro" id="IPR010992">
    <property type="entry name" value="IHF-like_DNA-bd_dom_sf"/>
</dbReference>
<dbReference type="InterPro" id="IPR005684">
    <property type="entry name" value="IHF_alpha"/>
</dbReference>
<dbReference type="NCBIfam" id="TIGR00987">
    <property type="entry name" value="himA"/>
    <property type="match status" value="1"/>
</dbReference>
<dbReference type="NCBIfam" id="NF001401">
    <property type="entry name" value="PRK00285.1"/>
    <property type="match status" value="1"/>
</dbReference>
<dbReference type="PANTHER" id="PTHR33175">
    <property type="entry name" value="DNA-BINDING PROTEIN HU"/>
    <property type="match status" value="1"/>
</dbReference>
<dbReference type="PANTHER" id="PTHR33175:SF2">
    <property type="entry name" value="INTEGRATION HOST FACTOR SUBUNIT ALPHA"/>
    <property type="match status" value="1"/>
</dbReference>
<dbReference type="Pfam" id="PF00216">
    <property type="entry name" value="Bac_DNA_binding"/>
    <property type="match status" value="1"/>
</dbReference>
<dbReference type="PRINTS" id="PR01727">
    <property type="entry name" value="DNABINDINGHU"/>
</dbReference>
<dbReference type="SMART" id="SM00411">
    <property type="entry name" value="BHL"/>
    <property type="match status" value="1"/>
</dbReference>
<dbReference type="SUPFAM" id="SSF47729">
    <property type="entry name" value="IHF-like DNA-binding proteins"/>
    <property type="match status" value="1"/>
</dbReference>
<dbReference type="PROSITE" id="PS00045">
    <property type="entry name" value="HISTONE_LIKE"/>
    <property type="match status" value="1"/>
</dbReference>